<proteinExistence type="evidence at transcript level"/>
<keyword id="KW-1015">Disulfide bond</keyword>
<keyword id="KW-1199">Hemostasis impairing toxin</keyword>
<keyword id="KW-0378">Hydrolase</keyword>
<keyword id="KW-0645">Protease</keyword>
<keyword id="KW-0964">Secreted</keyword>
<keyword id="KW-0720">Serine protease</keyword>
<keyword id="KW-0732">Signal</keyword>
<keyword id="KW-0800">Toxin</keyword>
<keyword id="KW-0865">Zymogen</keyword>
<accession>Q9I8X0</accession>
<protein>
    <recommendedName>
        <fullName>Snake venom serine protease Dav-KN</fullName>
        <shortName>SVSP</shortName>
        <ecNumber>3.4.21.-</ecNumber>
    </recommendedName>
</protein>
<organism>
    <name type="scientific">Deinagkistrodon acutus</name>
    <name type="common">Hundred-pace snake</name>
    <name type="synonym">Agkistrodon acutus</name>
    <dbReference type="NCBI Taxonomy" id="36307"/>
    <lineage>
        <taxon>Eukaryota</taxon>
        <taxon>Metazoa</taxon>
        <taxon>Chordata</taxon>
        <taxon>Craniata</taxon>
        <taxon>Vertebrata</taxon>
        <taxon>Euteleostomi</taxon>
        <taxon>Lepidosauria</taxon>
        <taxon>Squamata</taxon>
        <taxon>Bifurcata</taxon>
        <taxon>Unidentata</taxon>
        <taxon>Episquamata</taxon>
        <taxon>Toxicofera</taxon>
        <taxon>Serpentes</taxon>
        <taxon>Colubroidea</taxon>
        <taxon>Viperidae</taxon>
        <taxon>Crotalinae</taxon>
        <taxon>Deinagkistrodon</taxon>
    </lineage>
</organism>
<comment type="function">
    <text evidence="1">Snake venom serine protease that may act in the hemostasis system of the prey.</text>
</comment>
<comment type="subunit">
    <text evidence="1">Monomer.</text>
</comment>
<comment type="subcellular location">
    <subcellularLocation>
        <location>Secreted</location>
    </subcellularLocation>
</comment>
<comment type="tissue specificity">
    <text>Expressed by the venom gland.</text>
</comment>
<comment type="similarity">
    <text evidence="2">Belongs to the peptidase S1 family. Snake venom subfamily.</text>
</comment>
<evidence type="ECO:0000250" key="1"/>
<evidence type="ECO:0000255" key="2">
    <source>
        <dbReference type="PROSITE-ProRule" id="PRU00274"/>
    </source>
</evidence>
<sequence length="257" mass="28334">MVLIRVLANLLILQLSYAQKSSELVIGGDECNINEHPFLVLVYYDDYQCGGTLLNEEWVLTAAHCNGKDMEIYLGVHSKKVPNKDVQRRVPKEKFFCDSSKTYTKWNKDIMLIRLDRPVRKSAHIAPLSLPSSPPSVGSVCRIMGWGSITPVEVTFPDVPYCANINLLDDVECKPGYPELLPEYKTLCAGILEGGIDTCGFDSGAPLISNGQFQGIVSWGGDPCAQPREPGVYTNVFDHLDWIKGIIAGNTDVTCPP</sequence>
<feature type="signal peptide" evidence="1">
    <location>
        <begin position="1"/>
        <end position="18"/>
    </location>
</feature>
<feature type="propeptide" id="PRO_0000028365" evidence="1">
    <location>
        <begin position="19"/>
        <end position="24"/>
    </location>
</feature>
<feature type="chain" id="PRO_0000028366" description="Snake venom serine protease Dav-KN">
    <location>
        <begin position="25"/>
        <end position="257"/>
    </location>
</feature>
<feature type="domain" description="Peptidase S1" evidence="2">
    <location>
        <begin position="25"/>
        <end position="248"/>
    </location>
</feature>
<feature type="active site" description="Charge relay system" evidence="1">
    <location>
        <position position="64"/>
    </location>
</feature>
<feature type="active site" description="Charge relay system" evidence="1">
    <location>
        <position position="109"/>
    </location>
</feature>
<feature type="active site" description="Charge relay system" evidence="1">
    <location>
        <position position="203"/>
    </location>
</feature>
<feature type="disulfide bond" evidence="2">
    <location>
        <begin position="31"/>
        <end position="162"/>
    </location>
</feature>
<feature type="disulfide bond" evidence="2">
    <location>
        <begin position="49"/>
        <end position="65"/>
    </location>
</feature>
<feature type="disulfide bond" evidence="2">
    <location>
        <begin position="97"/>
        <end position="255"/>
    </location>
</feature>
<feature type="disulfide bond" evidence="2">
    <location>
        <begin position="173"/>
        <end position="188"/>
    </location>
</feature>
<feature type="disulfide bond" evidence="2">
    <location>
        <begin position="199"/>
        <end position="224"/>
    </location>
</feature>
<reference key="1">
    <citation type="journal article" date="2001" name="Biochem. J.">
        <title>Serine protease isoforms of Deinagkistrodon acutus venom: cloning, sequencing and phylogenetic analysis.</title>
        <authorList>
            <person name="Wang Y.-M."/>
            <person name="Wang S.-R."/>
            <person name="Tsai I.-H."/>
        </authorList>
    </citation>
    <scope>NUCLEOTIDE SEQUENCE [MRNA]</scope>
    <source>
        <tissue>Venom gland</tissue>
    </source>
</reference>
<dbReference type="EC" id="3.4.21.-"/>
<dbReference type="EMBL" id="AF159059">
    <property type="protein sequence ID" value="AAF76379.1"/>
    <property type="molecule type" value="mRNA"/>
</dbReference>
<dbReference type="SMR" id="Q9I8X0"/>
<dbReference type="MEROPS" id="S01.344"/>
<dbReference type="GO" id="GO:0005576">
    <property type="term" value="C:extracellular region"/>
    <property type="evidence" value="ECO:0007669"/>
    <property type="project" value="UniProtKB-SubCell"/>
</dbReference>
<dbReference type="GO" id="GO:0030141">
    <property type="term" value="C:secretory granule"/>
    <property type="evidence" value="ECO:0007669"/>
    <property type="project" value="TreeGrafter"/>
</dbReference>
<dbReference type="GO" id="GO:0004252">
    <property type="term" value="F:serine-type endopeptidase activity"/>
    <property type="evidence" value="ECO:0007669"/>
    <property type="project" value="InterPro"/>
</dbReference>
<dbReference type="GO" id="GO:0090729">
    <property type="term" value="F:toxin activity"/>
    <property type="evidence" value="ECO:0007669"/>
    <property type="project" value="UniProtKB-KW"/>
</dbReference>
<dbReference type="GO" id="GO:0006508">
    <property type="term" value="P:proteolysis"/>
    <property type="evidence" value="ECO:0007669"/>
    <property type="project" value="UniProtKB-KW"/>
</dbReference>
<dbReference type="CDD" id="cd00190">
    <property type="entry name" value="Tryp_SPc"/>
    <property type="match status" value="1"/>
</dbReference>
<dbReference type="FunFam" id="2.40.10.10:FF:000158">
    <property type="entry name" value="Thrombin-like enzyme saxthrombin"/>
    <property type="match status" value="1"/>
</dbReference>
<dbReference type="FunFam" id="2.40.10.10:FF:000153">
    <property type="entry name" value="Venom plasminogen activator TSV-PA"/>
    <property type="match status" value="1"/>
</dbReference>
<dbReference type="Gene3D" id="2.40.10.10">
    <property type="entry name" value="Trypsin-like serine proteases"/>
    <property type="match status" value="2"/>
</dbReference>
<dbReference type="InterPro" id="IPR009003">
    <property type="entry name" value="Peptidase_S1_PA"/>
</dbReference>
<dbReference type="InterPro" id="IPR043504">
    <property type="entry name" value="Peptidase_S1_PA_chymotrypsin"/>
</dbReference>
<dbReference type="InterPro" id="IPR001314">
    <property type="entry name" value="Peptidase_S1A"/>
</dbReference>
<dbReference type="InterPro" id="IPR001254">
    <property type="entry name" value="Trypsin_dom"/>
</dbReference>
<dbReference type="InterPro" id="IPR018114">
    <property type="entry name" value="TRYPSIN_HIS"/>
</dbReference>
<dbReference type="PANTHER" id="PTHR24271:SF47">
    <property type="entry name" value="KALLIKREIN-1"/>
    <property type="match status" value="1"/>
</dbReference>
<dbReference type="PANTHER" id="PTHR24271">
    <property type="entry name" value="KALLIKREIN-RELATED"/>
    <property type="match status" value="1"/>
</dbReference>
<dbReference type="Pfam" id="PF00089">
    <property type="entry name" value="Trypsin"/>
    <property type="match status" value="1"/>
</dbReference>
<dbReference type="PRINTS" id="PR00722">
    <property type="entry name" value="CHYMOTRYPSIN"/>
</dbReference>
<dbReference type="SMART" id="SM00020">
    <property type="entry name" value="Tryp_SPc"/>
    <property type="match status" value="1"/>
</dbReference>
<dbReference type="SUPFAM" id="SSF50494">
    <property type="entry name" value="Trypsin-like serine proteases"/>
    <property type="match status" value="1"/>
</dbReference>
<dbReference type="PROSITE" id="PS50240">
    <property type="entry name" value="TRYPSIN_DOM"/>
    <property type="match status" value="1"/>
</dbReference>
<dbReference type="PROSITE" id="PS00134">
    <property type="entry name" value="TRYPSIN_HIS"/>
    <property type="match status" value="1"/>
</dbReference>
<name>VSP3_DEIAC</name>